<gene>
    <name type="ordered locus">SACOL1485</name>
</gene>
<sequence length="187" mass="22191">MVKTVYVTGYKSFELNIFKDDAPEVHYLKQFIKHKIEQLLDEGLEWVLIQGQMGIELWTAEVVIELQRTYDSLKFAVITPFQGHTEKWNEHNQSKYANIIKHADYVDSIFHTSYQGPFQFKQADQFMLEHSDQTLLIYDEEQEASPKFFKQMLVDFMDKTNYTCDIVTFDELTAFINDLQWSEDQSF</sequence>
<name>Y1485_STAAC</name>
<comment type="similarity">
    <text evidence="1">Belongs to the UPF0398 family.</text>
</comment>
<proteinExistence type="inferred from homology"/>
<reference key="1">
    <citation type="journal article" date="2005" name="J. Bacteriol.">
        <title>Insights on evolution of virulence and resistance from the complete genome analysis of an early methicillin-resistant Staphylococcus aureus strain and a biofilm-producing methicillin-resistant Staphylococcus epidermidis strain.</title>
        <authorList>
            <person name="Gill S.R."/>
            <person name="Fouts D.E."/>
            <person name="Archer G.L."/>
            <person name="Mongodin E.F."/>
            <person name="DeBoy R.T."/>
            <person name="Ravel J."/>
            <person name="Paulsen I.T."/>
            <person name="Kolonay J.F."/>
            <person name="Brinkac L.M."/>
            <person name="Beanan M.J."/>
            <person name="Dodson R.J."/>
            <person name="Daugherty S.C."/>
            <person name="Madupu R."/>
            <person name="Angiuoli S.V."/>
            <person name="Durkin A.S."/>
            <person name="Haft D.H."/>
            <person name="Vamathevan J.J."/>
            <person name="Khouri H."/>
            <person name="Utterback T.R."/>
            <person name="Lee C."/>
            <person name="Dimitrov G."/>
            <person name="Jiang L."/>
            <person name="Qin H."/>
            <person name="Weidman J."/>
            <person name="Tran K."/>
            <person name="Kang K.H."/>
            <person name="Hance I.R."/>
            <person name="Nelson K.E."/>
            <person name="Fraser C.M."/>
        </authorList>
    </citation>
    <scope>NUCLEOTIDE SEQUENCE [LARGE SCALE GENOMIC DNA]</scope>
    <source>
        <strain>COL</strain>
    </source>
</reference>
<accession>Q5HFX7</accession>
<organism>
    <name type="scientific">Staphylococcus aureus (strain COL)</name>
    <dbReference type="NCBI Taxonomy" id="93062"/>
    <lineage>
        <taxon>Bacteria</taxon>
        <taxon>Bacillati</taxon>
        <taxon>Bacillota</taxon>
        <taxon>Bacilli</taxon>
        <taxon>Bacillales</taxon>
        <taxon>Staphylococcaceae</taxon>
        <taxon>Staphylococcus</taxon>
    </lineage>
</organism>
<evidence type="ECO:0000255" key="1">
    <source>
        <dbReference type="HAMAP-Rule" id="MF_01575"/>
    </source>
</evidence>
<feature type="chain" id="PRO_0000267169" description="UPF0398 protein SACOL1485">
    <location>
        <begin position="1"/>
        <end position="187"/>
    </location>
</feature>
<dbReference type="EMBL" id="CP000046">
    <property type="protein sequence ID" value="AAW36681.1"/>
    <property type="molecule type" value="Genomic_DNA"/>
</dbReference>
<dbReference type="RefSeq" id="WP_000241308.1">
    <property type="nucleotide sequence ID" value="NZ_JBGOFO010000003.1"/>
</dbReference>
<dbReference type="SMR" id="Q5HFX7"/>
<dbReference type="KEGG" id="sac:SACOL1485"/>
<dbReference type="HOGENOM" id="CLU_105319_0_0_9"/>
<dbReference type="Proteomes" id="UP000000530">
    <property type="component" value="Chromosome"/>
</dbReference>
<dbReference type="Gene3D" id="3.40.50.450">
    <property type="match status" value="1"/>
</dbReference>
<dbReference type="HAMAP" id="MF_01575">
    <property type="entry name" value="UPF0398"/>
    <property type="match status" value="1"/>
</dbReference>
<dbReference type="InterPro" id="IPR010697">
    <property type="entry name" value="YspA"/>
</dbReference>
<dbReference type="NCBIfam" id="NF010181">
    <property type="entry name" value="PRK13660.1"/>
    <property type="match status" value="1"/>
</dbReference>
<dbReference type="PANTHER" id="PTHR38440:SF1">
    <property type="entry name" value="UPF0398 PROTEIN SPR0331"/>
    <property type="match status" value="1"/>
</dbReference>
<dbReference type="PANTHER" id="PTHR38440">
    <property type="entry name" value="UPF0398 PROTEIN YPSA"/>
    <property type="match status" value="1"/>
</dbReference>
<dbReference type="Pfam" id="PF06908">
    <property type="entry name" value="YpsA"/>
    <property type="match status" value="1"/>
</dbReference>
<dbReference type="PIRSF" id="PIRSF021290">
    <property type="entry name" value="DUF1273"/>
    <property type="match status" value="1"/>
</dbReference>
<dbReference type="SUPFAM" id="SSF102405">
    <property type="entry name" value="MCP/YpsA-like"/>
    <property type="match status" value="1"/>
</dbReference>
<protein>
    <recommendedName>
        <fullName evidence="1">UPF0398 protein SACOL1485</fullName>
    </recommendedName>
</protein>